<evidence type="ECO:0000255" key="1">
    <source>
        <dbReference type="HAMAP-Rule" id="MF_00198"/>
    </source>
</evidence>
<reference key="1">
    <citation type="journal article" date="2009" name="J. Bacteriol.">
        <title>Complete genome sequence and comparative genome analysis of enteropathogenic Escherichia coli O127:H6 strain E2348/69.</title>
        <authorList>
            <person name="Iguchi A."/>
            <person name="Thomson N.R."/>
            <person name="Ogura Y."/>
            <person name="Saunders D."/>
            <person name="Ooka T."/>
            <person name="Henderson I.R."/>
            <person name="Harris D."/>
            <person name="Asadulghani M."/>
            <person name="Kurokawa K."/>
            <person name="Dean P."/>
            <person name="Kenny B."/>
            <person name="Quail M.A."/>
            <person name="Thurston S."/>
            <person name="Dougan G."/>
            <person name="Hayashi T."/>
            <person name="Parkhill J."/>
            <person name="Frankel G."/>
        </authorList>
    </citation>
    <scope>NUCLEOTIDE SEQUENCE [LARGE SCALE GENOMIC DNA]</scope>
    <source>
        <strain>E2348/69 / EPEC</strain>
    </source>
</reference>
<gene>
    <name evidence="1" type="primary">speE</name>
    <name type="ordered locus">E2348C_0124</name>
</gene>
<keyword id="KW-0963">Cytoplasm</keyword>
<keyword id="KW-0620">Polyamine biosynthesis</keyword>
<keyword id="KW-1185">Reference proteome</keyword>
<keyword id="KW-0745">Spermidine biosynthesis</keyword>
<keyword id="KW-0808">Transferase</keyword>
<dbReference type="EC" id="2.5.1.16" evidence="1"/>
<dbReference type="EMBL" id="FM180568">
    <property type="protein sequence ID" value="CAS07672.1"/>
    <property type="molecule type" value="Genomic_DNA"/>
</dbReference>
<dbReference type="RefSeq" id="WP_000818405.1">
    <property type="nucleotide sequence ID" value="NC_011601.1"/>
</dbReference>
<dbReference type="SMR" id="B7UIG9"/>
<dbReference type="KEGG" id="ecg:E2348C_0124"/>
<dbReference type="HOGENOM" id="CLU_048199_0_0_6"/>
<dbReference type="UniPathway" id="UPA00248">
    <property type="reaction ID" value="UER00314"/>
</dbReference>
<dbReference type="Proteomes" id="UP000008205">
    <property type="component" value="Chromosome"/>
</dbReference>
<dbReference type="GO" id="GO:0005829">
    <property type="term" value="C:cytosol"/>
    <property type="evidence" value="ECO:0007669"/>
    <property type="project" value="TreeGrafter"/>
</dbReference>
<dbReference type="GO" id="GO:0004766">
    <property type="term" value="F:spermidine synthase activity"/>
    <property type="evidence" value="ECO:0007669"/>
    <property type="project" value="UniProtKB-UniRule"/>
</dbReference>
<dbReference type="GO" id="GO:0008295">
    <property type="term" value="P:spermidine biosynthetic process"/>
    <property type="evidence" value="ECO:0007669"/>
    <property type="project" value="UniProtKB-UniRule"/>
</dbReference>
<dbReference type="CDD" id="cd02440">
    <property type="entry name" value="AdoMet_MTases"/>
    <property type="match status" value="1"/>
</dbReference>
<dbReference type="FunFam" id="2.30.140.10:FF:000002">
    <property type="entry name" value="Polyamine aminopropyltransferase"/>
    <property type="match status" value="1"/>
</dbReference>
<dbReference type="FunFam" id="3.40.50.150:FF:000026">
    <property type="entry name" value="Polyamine aminopropyltransferase"/>
    <property type="match status" value="1"/>
</dbReference>
<dbReference type="Gene3D" id="2.30.140.10">
    <property type="entry name" value="Spermidine synthase, tetramerisation domain"/>
    <property type="match status" value="1"/>
</dbReference>
<dbReference type="Gene3D" id="3.40.50.150">
    <property type="entry name" value="Vaccinia Virus protein VP39"/>
    <property type="match status" value="1"/>
</dbReference>
<dbReference type="HAMAP" id="MF_00198">
    <property type="entry name" value="Spermidine_synth"/>
    <property type="match status" value="1"/>
</dbReference>
<dbReference type="InterPro" id="IPR030374">
    <property type="entry name" value="PABS"/>
</dbReference>
<dbReference type="InterPro" id="IPR030373">
    <property type="entry name" value="PABS_CS"/>
</dbReference>
<dbReference type="InterPro" id="IPR029063">
    <property type="entry name" value="SAM-dependent_MTases_sf"/>
</dbReference>
<dbReference type="InterPro" id="IPR001045">
    <property type="entry name" value="Spermi_synthase"/>
</dbReference>
<dbReference type="InterPro" id="IPR035246">
    <property type="entry name" value="Spermidine_synt_N"/>
</dbReference>
<dbReference type="InterPro" id="IPR037163">
    <property type="entry name" value="Spermidine_synt_N_sf"/>
</dbReference>
<dbReference type="NCBIfam" id="NF037959">
    <property type="entry name" value="MFS_SpdSyn"/>
    <property type="match status" value="1"/>
</dbReference>
<dbReference type="NCBIfam" id="NF002010">
    <property type="entry name" value="PRK00811.1"/>
    <property type="match status" value="1"/>
</dbReference>
<dbReference type="NCBIfam" id="TIGR00417">
    <property type="entry name" value="speE"/>
    <property type="match status" value="1"/>
</dbReference>
<dbReference type="PANTHER" id="PTHR11558:SF11">
    <property type="entry name" value="SPERMIDINE SYNTHASE"/>
    <property type="match status" value="1"/>
</dbReference>
<dbReference type="PANTHER" id="PTHR11558">
    <property type="entry name" value="SPERMIDINE/SPERMINE SYNTHASE"/>
    <property type="match status" value="1"/>
</dbReference>
<dbReference type="Pfam" id="PF17284">
    <property type="entry name" value="Spermine_synt_N"/>
    <property type="match status" value="1"/>
</dbReference>
<dbReference type="Pfam" id="PF01564">
    <property type="entry name" value="Spermine_synth"/>
    <property type="match status" value="1"/>
</dbReference>
<dbReference type="SUPFAM" id="SSF53335">
    <property type="entry name" value="S-adenosyl-L-methionine-dependent methyltransferases"/>
    <property type="match status" value="1"/>
</dbReference>
<dbReference type="PROSITE" id="PS01330">
    <property type="entry name" value="PABS_1"/>
    <property type="match status" value="1"/>
</dbReference>
<dbReference type="PROSITE" id="PS51006">
    <property type="entry name" value="PABS_2"/>
    <property type="match status" value="1"/>
</dbReference>
<comment type="function">
    <text evidence="1">Catalyzes the irreversible transfer of a propylamine group from the amino donor S-adenosylmethioninamine (decarboxy-AdoMet) to putrescine (1,4-diaminobutane) to yield spermidine.</text>
</comment>
<comment type="catalytic activity">
    <reaction evidence="1">
        <text>S-adenosyl 3-(methylsulfanyl)propylamine + putrescine = S-methyl-5'-thioadenosine + spermidine + H(+)</text>
        <dbReference type="Rhea" id="RHEA:12721"/>
        <dbReference type="ChEBI" id="CHEBI:15378"/>
        <dbReference type="ChEBI" id="CHEBI:17509"/>
        <dbReference type="ChEBI" id="CHEBI:57443"/>
        <dbReference type="ChEBI" id="CHEBI:57834"/>
        <dbReference type="ChEBI" id="CHEBI:326268"/>
        <dbReference type="EC" id="2.5.1.16"/>
    </reaction>
</comment>
<comment type="pathway">
    <text evidence="1">Amine and polyamine biosynthesis; spermidine biosynthesis; spermidine from putrescine: step 1/1.</text>
</comment>
<comment type="subunit">
    <text evidence="1">Homodimer or homotetramer.</text>
</comment>
<comment type="subcellular location">
    <subcellularLocation>
        <location evidence="1">Cytoplasm</location>
    </subcellularLocation>
</comment>
<comment type="similarity">
    <text evidence="1">Belongs to the spermidine/spermine synthase family.</text>
</comment>
<sequence length="288" mass="32334">MAEKKQWHETLHDQFGQYFAVDNVLYHEKTDHQDLIIFENAAFGRVMALDGVVQTTERDEFIYHEMMTHVPLLAHGHAKHVLIIGGGDGAMLREVTRHKNVESITMVEIDAGVVSFCRQYLPNHNAGSYDDPRFKLVIDDGVNFVNQTNQTFDVIISDCTDPIGPGESLFTSAFYEGCKRCLNPGGIFVAQNGVCFLQQEEAIDSHRKLSHYFSDVGFYQAAIPTYYGGIMTFAWATDNDALRHLSTEIIQARFLASGLKCRYYNPAVHTAAFALPQYLQDALASQPS</sequence>
<feature type="chain" id="PRO_1000124439" description="Polyamine aminopropyltransferase">
    <location>
        <begin position="1"/>
        <end position="288"/>
    </location>
</feature>
<feature type="domain" description="PABS" evidence="1">
    <location>
        <begin position="9"/>
        <end position="238"/>
    </location>
</feature>
<feature type="active site" description="Proton acceptor" evidence="1">
    <location>
        <position position="158"/>
    </location>
</feature>
<feature type="binding site" evidence="1">
    <location>
        <position position="33"/>
    </location>
    <ligand>
        <name>S-methyl-5'-thioadenosine</name>
        <dbReference type="ChEBI" id="CHEBI:17509"/>
    </ligand>
</feature>
<feature type="binding site" evidence="1">
    <location>
        <position position="64"/>
    </location>
    <ligand>
        <name>spermidine</name>
        <dbReference type="ChEBI" id="CHEBI:57834"/>
    </ligand>
</feature>
<feature type="binding site" evidence="1">
    <location>
        <position position="88"/>
    </location>
    <ligand>
        <name>spermidine</name>
        <dbReference type="ChEBI" id="CHEBI:57834"/>
    </ligand>
</feature>
<feature type="binding site" evidence="1">
    <location>
        <position position="108"/>
    </location>
    <ligand>
        <name>S-methyl-5'-thioadenosine</name>
        <dbReference type="ChEBI" id="CHEBI:17509"/>
    </ligand>
</feature>
<feature type="binding site" evidence="1">
    <location>
        <begin position="140"/>
        <end position="141"/>
    </location>
    <ligand>
        <name>S-methyl-5'-thioadenosine</name>
        <dbReference type="ChEBI" id="CHEBI:17509"/>
    </ligand>
</feature>
<feature type="binding site" evidence="1">
    <location>
        <begin position="158"/>
        <end position="161"/>
    </location>
    <ligand>
        <name>spermidine</name>
        <dbReference type="ChEBI" id="CHEBI:57834"/>
    </ligand>
</feature>
<feature type="binding site" evidence="1">
    <location>
        <position position="165"/>
    </location>
    <ligand>
        <name>S-methyl-5'-thioadenosine</name>
        <dbReference type="ChEBI" id="CHEBI:17509"/>
    </ligand>
</feature>
<name>SPEE_ECO27</name>
<organism>
    <name type="scientific">Escherichia coli O127:H6 (strain E2348/69 / EPEC)</name>
    <dbReference type="NCBI Taxonomy" id="574521"/>
    <lineage>
        <taxon>Bacteria</taxon>
        <taxon>Pseudomonadati</taxon>
        <taxon>Pseudomonadota</taxon>
        <taxon>Gammaproteobacteria</taxon>
        <taxon>Enterobacterales</taxon>
        <taxon>Enterobacteriaceae</taxon>
        <taxon>Escherichia</taxon>
    </lineage>
</organism>
<proteinExistence type="inferred from homology"/>
<accession>B7UIG9</accession>
<protein>
    <recommendedName>
        <fullName evidence="1">Polyamine aminopropyltransferase</fullName>
    </recommendedName>
    <alternativeName>
        <fullName evidence="1">Putrescine aminopropyltransferase</fullName>
        <shortName evidence="1">PAPT</shortName>
    </alternativeName>
    <alternativeName>
        <fullName evidence="1">Spermidine synthase</fullName>
        <shortName evidence="1">SPDS</shortName>
        <shortName evidence="1">SPDSY</shortName>
        <ecNumber evidence="1">2.5.1.16</ecNumber>
    </alternativeName>
</protein>